<protein>
    <recommendedName>
        <fullName>Corticosteroid-binding globulin</fullName>
        <shortName>CBG</shortName>
    </recommendedName>
    <alternativeName>
        <fullName>Serpin A6</fullName>
    </alternativeName>
    <alternativeName>
        <fullName>Transcortin</fullName>
    </alternativeName>
</protein>
<feature type="signal peptide" evidence="1">
    <location>
        <begin position="1"/>
        <end position="22"/>
    </location>
</feature>
<feature type="chain" id="PRO_0000230781" description="Corticosteroid-binding globulin">
    <location>
        <begin position="23"/>
        <end position="405"/>
    </location>
</feature>
<feature type="binding site" evidence="1">
    <location>
        <position position="286"/>
    </location>
    <ligand>
        <name>cortisol</name>
        <dbReference type="ChEBI" id="CHEBI:17650"/>
    </ligand>
</feature>
<feature type="binding site" evidence="1">
    <location>
        <position position="393"/>
    </location>
    <ligand>
        <name>cortisol</name>
        <dbReference type="ChEBI" id="CHEBI:17650"/>
    </ligand>
</feature>
<feature type="site" description="Conserved cysteine within steroid binding domain" evidence="1">
    <location>
        <position position="250"/>
    </location>
</feature>
<feature type="glycosylation site" description="N-linked (GlcNAc...) asparagine" evidence="2">
    <location>
        <position position="26"/>
    </location>
</feature>
<feature type="glycosylation site" description="N-linked (GlcNAc...) asparagine" evidence="2">
    <location>
        <position position="31"/>
    </location>
</feature>
<feature type="glycosylation site" description="N-linked (GlcNAc...) asparagine" evidence="2">
    <location>
        <position position="96"/>
    </location>
</feature>
<feature type="glycosylation site" description="N-linked (GlcNAc...) asparagine" evidence="2">
    <location>
        <position position="260"/>
    </location>
</feature>
<feature type="glycosylation site" description="N-linked (GlcNAc...) asparagine" evidence="2">
    <location>
        <position position="330"/>
    </location>
</feature>
<feature type="glycosylation site" description="N-linked (GlcNAc...) asparagine" evidence="2">
    <location>
        <position position="369"/>
    </location>
</feature>
<proteinExistence type="evidence at transcript level"/>
<evidence type="ECO:0000250" key="1"/>
<evidence type="ECO:0000255" key="2"/>
<evidence type="ECO:0000305" key="3"/>
<keyword id="KW-0325">Glycoprotein</keyword>
<keyword id="KW-0446">Lipid-binding</keyword>
<keyword id="KW-1185">Reference proteome</keyword>
<keyword id="KW-0964">Secreted</keyword>
<keyword id="KW-0732">Signal</keyword>
<keyword id="KW-0754">Steroid-binding</keyword>
<keyword id="KW-0813">Transport</keyword>
<reference key="1">
    <citation type="submission" date="2004-11" db="EMBL/GenBank/DDBJ databases">
        <authorList>
            <consortium name="The German cDNA consortium"/>
        </authorList>
    </citation>
    <scope>NUCLEOTIDE SEQUENCE [LARGE SCALE MRNA]</scope>
    <source>
        <tissue>Kidney</tissue>
    </source>
</reference>
<organism>
    <name type="scientific">Pongo abelii</name>
    <name type="common">Sumatran orangutan</name>
    <name type="synonym">Pongo pygmaeus abelii</name>
    <dbReference type="NCBI Taxonomy" id="9601"/>
    <lineage>
        <taxon>Eukaryota</taxon>
        <taxon>Metazoa</taxon>
        <taxon>Chordata</taxon>
        <taxon>Craniata</taxon>
        <taxon>Vertebrata</taxon>
        <taxon>Euteleostomi</taxon>
        <taxon>Mammalia</taxon>
        <taxon>Eutheria</taxon>
        <taxon>Euarchontoglires</taxon>
        <taxon>Primates</taxon>
        <taxon>Haplorrhini</taxon>
        <taxon>Catarrhini</taxon>
        <taxon>Hominidae</taxon>
        <taxon>Pongo</taxon>
    </lineage>
</organism>
<accession>Q5R9E3</accession>
<name>CBG_PONAB</name>
<sequence length="405" mass="44995">MPLLLYTCLLWLSTSGLWTVQAMDPNTTYVNMSNHHRGLASANVDFAFSLYKHLVALSPKKNIFISPVSISMALAMLSLGTCGHTRAQLLQGLGFNLTGRSETEIHQGFQHLHQLFAESDTSLEMTMGNALFLDGSLELLESFSADIKHYYESEVLAMNFQDWATASRQINSYVKSKTQGKIADLLSGLDSPAILVLVNYIFFKGTWTQPFDLASTREENFYVDETTVVKVPMMLQSSTISYLHDSELPCQLVRLNYVGNGTVFFILPEKGKMNTVIAALSRDTINRWSAGLTSSQVDLYIPKVTISGVYDLGDVLEEMGIADLFTNQANFSRITQDAQLKSSKVVHKAVLQLNEEGVDTAGSTGVTLNLTSKPIILRFNQPFIIMIFDHFTWSSLFLARVVNPA</sequence>
<comment type="function">
    <text evidence="1">Major transport protein for glucocorticoids and progestins in the blood of almost all vertebrate species.</text>
</comment>
<comment type="subcellular location">
    <subcellularLocation>
        <location evidence="1">Secreted</location>
    </subcellularLocation>
</comment>
<comment type="tissue specificity">
    <text>Expressed by the liver; secreted in plasma.</text>
</comment>
<comment type="domain">
    <text evidence="1">Proteolytic cleavage leads to an important conformation change. This reduces the affinity for steroids (By similarity).</text>
</comment>
<comment type="similarity">
    <text evidence="3">Belongs to the serpin family.</text>
</comment>
<dbReference type="EMBL" id="CR859446">
    <property type="protein sequence ID" value="CAH91617.1"/>
    <property type="molecule type" value="mRNA"/>
</dbReference>
<dbReference type="RefSeq" id="NP_001125953.1">
    <property type="nucleotide sequence ID" value="NM_001132481.1"/>
</dbReference>
<dbReference type="SMR" id="Q5R9E3"/>
<dbReference type="FunCoup" id="Q5R9E3">
    <property type="interactions" value="106"/>
</dbReference>
<dbReference type="STRING" id="9601.ENSPPYP00000006937"/>
<dbReference type="MEROPS" id="I04.954"/>
<dbReference type="GlyCosmos" id="Q5R9E3">
    <property type="glycosylation" value="6 sites, No reported glycans"/>
</dbReference>
<dbReference type="GeneID" id="100172888"/>
<dbReference type="KEGG" id="pon:100172888"/>
<dbReference type="CTD" id="866"/>
<dbReference type="eggNOG" id="KOG2392">
    <property type="taxonomic scope" value="Eukaryota"/>
</dbReference>
<dbReference type="InParanoid" id="Q5R9E3"/>
<dbReference type="OrthoDB" id="671595at2759"/>
<dbReference type="Proteomes" id="UP000001595">
    <property type="component" value="Unplaced"/>
</dbReference>
<dbReference type="GO" id="GO:0005615">
    <property type="term" value="C:extracellular space"/>
    <property type="evidence" value="ECO:0007669"/>
    <property type="project" value="InterPro"/>
</dbReference>
<dbReference type="GO" id="GO:0004867">
    <property type="term" value="F:serine-type endopeptidase inhibitor activity"/>
    <property type="evidence" value="ECO:0007669"/>
    <property type="project" value="InterPro"/>
</dbReference>
<dbReference type="GO" id="GO:0005496">
    <property type="term" value="F:steroid binding"/>
    <property type="evidence" value="ECO:0000250"/>
    <property type="project" value="UniProtKB"/>
</dbReference>
<dbReference type="CDD" id="cd19554">
    <property type="entry name" value="serpinA6_CBG"/>
    <property type="match status" value="1"/>
</dbReference>
<dbReference type="FunFam" id="3.30.497.10:FF:000001">
    <property type="entry name" value="Serine protease inhibitor"/>
    <property type="match status" value="1"/>
</dbReference>
<dbReference type="FunFam" id="2.30.39.10:FF:000002">
    <property type="entry name" value="Serpin family D member 1"/>
    <property type="match status" value="1"/>
</dbReference>
<dbReference type="Gene3D" id="2.30.39.10">
    <property type="entry name" value="Alpha-1-antitrypsin, domain 1"/>
    <property type="match status" value="1"/>
</dbReference>
<dbReference type="Gene3D" id="3.30.497.10">
    <property type="entry name" value="Antithrombin, subunit I, domain 2"/>
    <property type="match status" value="1"/>
</dbReference>
<dbReference type="InterPro" id="IPR023795">
    <property type="entry name" value="Serpin_CS"/>
</dbReference>
<dbReference type="InterPro" id="IPR023796">
    <property type="entry name" value="Serpin_dom"/>
</dbReference>
<dbReference type="InterPro" id="IPR000215">
    <property type="entry name" value="Serpin_fam"/>
</dbReference>
<dbReference type="InterPro" id="IPR036186">
    <property type="entry name" value="Serpin_sf"/>
</dbReference>
<dbReference type="InterPro" id="IPR042178">
    <property type="entry name" value="Serpin_sf_1"/>
</dbReference>
<dbReference type="InterPro" id="IPR042185">
    <property type="entry name" value="Serpin_sf_2"/>
</dbReference>
<dbReference type="PANTHER" id="PTHR11461:SF34">
    <property type="entry name" value="CORTICOSTEROID-BINDING GLOBULIN"/>
    <property type="match status" value="1"/>
</dbReference>
<dbReference type="PANTHER" id="PTHR11461">
    <property type="entry name" value="SERINE PROTEASE INHIBITOR, SERPIN"/>
    <property type="match status" value="1"/>
</dbReference>
<dbReference type="Pfam" id="PF00079">
    <property type="entry name" value="Serpin"/>
    <property type="match status" value="1"/>
</dbReference>
<dbReference type="PRINTS" id="PR00780">
    <property type="entry name" value="LEUSERPINII"/>
</dbReference>
<dbReference type="SMART" id="SM00093">
    <property type="entry name" value="SERPIN"/>
    <property type="match status" value="1"/>
</dbReference>
<dbReference type="SUPFAM" id="SSF56574">
    <property type="entry name" value="Serpins"/>
    <property type="match status" value="1"/>
</dbReference>
<dbReference type="PROSITE" id="PS00284">
    <property type="entry name" value="SERPIN"/>
    <property type="match status" value="1"/>
</dbReference>
<gene>
    <name type="primary">SERPINA6</name>
</gene>